<dbReference type="EC" id="7.3.2.1" evidence="1"/>
<dbReference type="EMBL" id="CR522870">
    <property type="protein sequence ID" value="CAG36609.1"/>
    <property type="molecule type" value="Genomic_DNA"/>
</dbReference>
<dbReference type="SMR" id="Q6AM16"/>
<dbReference type="STRING" id="177439.DP1880"/>
<dbReference type="KEGG" id="dps:DP1880"/>
<dbReference type="eggNOG" id="COG1117">
    <property type="taxonomic scope" value="Bacteria"/>
</dbReference>
<dbReference type="HOGENOM" id="CLU_000604_1_22_7"/>
<dbReference type="OrthoDB" id="5448699at2"/>
<dbReference type="Proteomes" id="UP000000602">
    <property type="component" value="Chromosome"/>
</dbReference>
<dbReference type="GO" id="GO:0005886">
    <property type="term" value="C:plasma membrane"/>
    <property type="evidence" value="ECO:0007669"/>
    <property type="project" value="UniProtKB-SubCell"/>
</dbReference>
<dbReference type="GO" id="GO:0005524">
    <property type="term" value="F:ATP binding"/>
    <property type="evidence" value="ECO:0007669"/>
    <property type="project" value="UniProtKB-KW"/>
</dbReference>
<dbReference type="GO" id="GO:0016887">
    <property type="term" value="F:ATP hydrolysis activity"/>
    <property type="evidence" value="ECO:0007669"/>
    <property type="project" value="InterPro"/>
</dbReference>
<dbReference type="GO" id="GO:0015415">
    <property type="term" value="F:ATPase-coupled phosphate ion transmembrane transporter activity"/>
    <property type="evidence" value="ECO:0007669"/>
    <property type="project" value="UniProtKB-EC"/>
</dbReference>
<dbReference type="GO" id="GO:0035435">
    <property type="term" value="P:phosphate ion transmembrane transport"/>
    <property type="evidence" value="ECO:0007669"/>
    <property type="project" value="InterPro"/>
</dbReference>
<dbReference type="CDD" id="cd03260">
    <property type="entry name" value="ABC_PstB_phosphate_transporter"/>
    <property type="match status" value="1"/>
</dbReference>
<dbReference type="Gene3D" id="3.40.50.300">
    <property type="entry name" value="P-loop containing nucleotide triphosphate hydrolases"/>
    <property type="match status" value="1"/>
</dbReference>
<dbReference type="InterPro" id="IPR003593">
    <property type="entry name" value="AAA+_ATPase"/>
</dbReference>
<dbReference type="InterPro" id="IPR003439">
    <property type="entry name" value="ABC_transporter-like_ATP-bd"/>
</dbReference>
<dbReference type="InterPro" id="IPR017871">
    <property type="entry name" value="ABC_transporter-like_CS"/>
</dbReference>
<dbReference type="InterPro" id="IPR027417">
    <property type="entry name" value="P-loop_NTPase"/>
</dbReference>
<dbReference type="InterPro" id="IPR005670">
    <property type="entry name" value="PstB-like"/>
</dbReference>
<dbReference type="NCBIfam" id="TIGR00972">
    <property type="entry name" value="3a0107s01c2"/>
    <property type="match status" value="1"/>
</dbReference>
<dbReference type="PANTHER" id="PTHR43423">
    <property type="entry name" value="ABC TRANSPORTER I FAMILY MEMBER 17"/>
    <property type="match status" value="1"/>
</dbReference>
<dbReference type="PANTHER" id="PTHR43423:SF1">
    <property type="entry name" value="ABC TRANSPORTER I FAMILY MEMBER 17"/>
    <property type="match status" value="1"/>
</dbReference>
<dbReference type="Pfam" id="PF00005">
    <property type="entry name" value="ABC_tran"/>
    <property type="match status" value="1"/>
</dbReference>
<dbReference type="SMART" id="SM00382">
    <property type="entry name" value="AAA"/>
    <property type="match status" value="1"/>
</dbReference>
<dbReference type="SUPFAM" id="SSF52540">
    <property type="entry name" value="P-loop containing nucleoside triphosphate hydrolases"/>
    <property type="match status" value="1"/>
</dbReference>
<dbReference type="PROSITE" id="PS00211">
    <property type="entry name" value="ABC_TRANSPORTER_1"/>
    <property type="match status" value="1"/>
</dbReference>
<dbReference type="PROSITE" id="PS50893">
    <property type="entry name" value="ABC_TRANSPORTER_2"/>
    <property type="match status" value="1"/>
</dbReference>
<dbReference type="PROSITE" id="PS51238">
    <property type="entry name" value="PSTB"/>
    <property type="match status" value="1"/>
</dbReference>
<organism>
    <name type="scientific">Desulfotalea psychrophila (strain LSv54 / DSM 12343)</name>
    <dbReference type="NCBI Taxonomy" id="177439"/>
    <lineage>
        <taxon>Bacteria</taxon>
        <taxon>Pseudomonadati</taxon>
        <taxon>Thermodesulfobacteriota</taxon>
        <taxon>Desulfobulbia</taxon>
        <taxon>Desulfobulbales</taxon>
        <taxon>Desulfocapsaceae</taxon>
        <taxon>Desulfotalea</taxon>
    </lineage>
</organism>
<gene>
    <name evidence="1" type="primary">pstB</name>
    <name type="ordered locus">DP1880</name>
</gene>
<comment type="function">
    <text evidence="1">Part of the ABC transporter complex PstSACB involved in phosphate import. Responsible for energy coupling to the transport system.</text>
</comment>
<comment type="catalytic activity">
    <reaction evidence="1">
        <text>phosphate(out) + ATP + H2O = ADP + 2 phosphate(in) + H(+)</text>
        <dbReference type="Rhea" id="RHEA:24440"/>
        <dbReference type="ChEBI" id="CHEBI:15377"/>
        <dbReference type="ChEBI" id="CHEBI:15378"/>
        <dbReference type="ChEBI" id="CHEBI:30616"/>
        <dbReference type="ChEBI" id="CHEBI:43474"/>
        <dbReference type="ChEBI" id="CHEBI:456216"/>
        <dbReference type="EC" id="7.3.2.1"/>
    </reaction>
</comment>
<comment type="subunit">
    <text evidence="1">The complex is composed of two ATP-binding proteins (PstB), two transmembrane proteins (PstC and PstA) and a solute-binding protein (PstS).</text>
</comment>
<comment type="subcellular location">
    <subcellularLocation>
        <location evidence="1">Cell inner membrane</location>
        <topology evidence="1">Peripheral membrane protein</topology>
    </subcellularLocation>
</comment>
<comment type="similarity">
    <text evidence="1">Belongs to the ABC transporter superfamily. Phosphate importer (TC 3.A.1.7) family.</text>
</comment>
<name>PSTB_DESPS</name>
<reference key="1">
    <citation type="journal article" date="2004" name="Environ. Microbiol.">
        <title>The genome of Desulfotalea psychrophila, a sulfate-reducing bacterium from permanently cold Arctic sediments.</title>
        <authorList>
            <person name="Rabus R."/>
            <person name="Ruepp A."/>
            <person name="Frickey T."/>
            <person name="Rattei T."/>
            <person name="Fartmann B."/>
            <person name="Stark M."/>
            <person name="Bauer M."/>
            <person name="Zibat A."/>
            <person name="Lombardot T."/>
            <person name="Becker I."/>
            <person name="Amann J."/>
            <person name="Gellner K."/>
            <person name="Teeling H."/>
            <person name="Leuschner W.D."/>
            <person name="Gloeckner F.-O."/>
            <person name="Lupas A.N."/>
            <person name="Amann R."/>
            <person name="Klenk H.-P."/>
        </authorList>
    </citation>
    <scope>NUCLEOTIDE SEQUENCE [LARGE SCALE GENOMIC DNA]</scope>
    <source>
        <strain>DSM 12343 / LSv54</strain>
    </source>
</reference>
<evidence type="ECO:0000255" key="1">
    <source>
        <dbReference type="HAMAP-Rule" id="MF_01702"/>
    </source>
</evidence>
<feature type="chain" id="PRO_0000092808" description="Phosphate import ATP-binding protein PstB">
    <location>
        <begin position="1"/>
        <end position="293"/>
    </location>
</feature>
<feature type="domain" description="ABC transporter" evidence="1">
    <location>
        <begin position="46"/>
        <end position="288"/>
    </location>
</feature>
<feature type="binding site" evidence="1">
    <location>
        <begin position="78"/>
        <end position="85"/>
    </location>
    <ligand>
        <name>ATP</name>
        <dbReference type="ChEBI" id="CHEBI:30616"/>
    </ligand>
</feature>
<proteinExistence type="inferred from homology"/>
<protein>
    <recommendedName>
        <fullName evidence="1">Phosphate import ATP-binding protein PstB</fullName>
        <ecNumber evidence="1">7.3.2.1</ecNumber>
    </recommendedName>
    <alternativeName>
        <fullName evidence="1">ABC phosphate transporter</fullName>
    </alternativeName>
    <alternativeName>
        <fullName evidence="1">Phosphate-transporting ATPase</fullName>
    </alternativeName>
</protein>
<keyword id="KW-0067">ATP-binding</keyword>
<keyword id="KW-0997">Cell inner membrane</keyword>
<keyword id="KW-1003">Cell membrane</keyword>
<keyword id="KW-0472">Membrane</keyword>
<keyword id="KW-0547">Nucleotide-binding</keyword>
<keyword id="KW-0592">Phosphate transport</keyword>
<keyword id="KW-1185">Reference proteome</keyword>
<keyword id="KW-1278">Translocase</keyword>
<keyword id="KW-0813">Transport</keyword>
<accession>Q6AM16</accession>
<sequence length="293" mass="31764">MPAGLITALPNQLRAITMQLRLDTNGELSETSQQTVGVPFVENARMTCRKVDVHYGEKCAIKNISIDVGRNEVLAMIGPSGCGKSTFLRCLNRMNDSLASCRVSGDITLDGVNIYAPTVDVVPLRAQVGMVFQKPNPFPKSIFDNVSYGPRIHGLATGKADLSEIVESSLIKAGLWDEVKDRLHESGTSLSGGQQQRLCIARAIAVSPEVILMDEPCSALDPIATAKVEELIAELSTQYSIVIVTHAMQQASRVSQRTAYFHMGSLVEVGATEKIFTNPGHQLTEDYITGRFG</sequence>